<keyword id="KW-0489">Methyltransferase</keyword>
<keyword id="KW-1185">Reference proteome</keyword>
<keyword id="KW-0949">S-adenosyl-L-methionine</keyword>
<keyword id="KW-0808">Transferase</keyword>
<keyword id="KW-0819">tRNA processing</keyword>
<comment type="function">
    <text evidence="2">Catalyzes the formation of N(7)-methylguanine at position 46 (m7G46) in tRNA.</text>
</comment>
<comment type="catalytic activity">
    <reaction evidence="2">
        <text>guanosine(46) in tRNA + S-adenosyl-L-methionine = N(7)-methylguanosine(46) in tRNA + S-adenosyl-L-homocysteine</text>
        <dbReference type="Rhea" id="RHEA:42708"/>
        <dbReference type="Rhea" id="RHEA-COMP:10188"/>
        <dbReference type="Rhea" id="RHEA-COMP:10189"/>
        <dbReference type="ChEBI" id="CHEBI:57856"/>
        <dbReference type="ChEBI" id="CHEBI:59789"/>
        <dbReference type="ChEBI" id="CHEBI:74269"/>
        <dbReference type="ChEBI" id="CHEBI:74480"/>
        <dbReference type="EC" id="2.1.1.33"/>
    </reaction>
</comment>
<comment type="pathway">
    <text evidence="2">tRNA modification; N(7)-methylguanine-tRNA biosynthesis.</text>
</comment>
<comment type="similarity">
    <text evidence="2">Belongs to the class I-like SAM-binding methyltransferase superfamily. TrmB family.</text>
</comment>
<evidence type="ECO:0000250" key="1"/>
<evidence type="ECO:0000255" key="2">
    <source>
        <dbReference type="HAMAP-Rule" id="MF_01057"/>
    </source>
</evidence>
<evidence type="ECO:0000256" key="3">
    <source>
        <dbReference type="SAM" id="MobiDB-lite"/>
    </source>
</evidence>
<sequence>MSDSHHTPEAASASLRHVRAKGEPRFPDGPKADPAGSHFERRIRSFQPRRSRVTAGQADALQRLWPLWGLDIDGRRVVDLAELFGNARPVVLEIGFGMGETTARMAAADPDTNILAADVHTPGQGNLLGLAERQELPNIRVANGDAIILLREMLAPGSLAGLRVYFPDPWPKKRHHKRRLIQPEFLTLAATRLAPGAVVHCATDWEPYAEQMLDVLTAHPDFENTVPGGGFAPRPEHRPLTRFEGQGLDKGHVVNDLLFRRVQHKEPPPNG</sequence>
<protein>
    <recommendedName>
        <fullName evidence="2">tRNA (guanine-N(7)-)-methyltransferase</fullName>
        <ecNumber evidence="2">2.1.1.33</ecNumber>
    </recommendedName>
    <alternativeName>
        <fullName evidence="2">tRNA (guanine(46)-N(7))-methyltransferase</fullName>
    </alternativeName>
    <alternativeName>
        <fullName evidence="2">tRNA(m7G46)-methyltransferase</fullName>
    </alternativeName>
</protein>
<feature type="chain" id="PRO_0000171401" description="tRNA (guanine-N(7)-)-methyltransferase">
    <location>
        <begin position="1"/>
        <end position="271"/>
    </location>
</feature>
<feature type="region of interest" description="Disordered" evidence="3">
    <location>
        <begin position="1"/>
        <end position="52"/>
    </location>
</feature>
<feature type="compositionally biased region" description="Basic and acidic residues" evidence="3">
    <location>
        <begin position="20"/>
        <end position="31"/>
    </location>
</feature>
<feature type="active site" evidence="1">
    <location>
        <position position="168"/>
    </location>
</feature>
<feature type="binding site" evidence="2">
    <location>
        <position position="93"/>
    </location>
    <ligand>
        <name>S-adenosyl-L-methionine</name>
        <dbReference type="ChEBI" id="CHEBI:59789"/>
    </ligand>
</feature>
<feature type="binding site" evidence="2">
    <location>
        <position position="118"/>
    </location>
    <ligand>
        <name>S-adenosyl-L-methionine</name>
        <dbReference type="ChEBI" id="CHEBI:59789"/>
    </ligand>
</feature>
<feature type="binding site" evidence="2">
    <location>
        <position position="145"/>
    </location>
    <ligand>
        <name>S-adenosyl-L-methionine</name>
        <dbReference type="ChEBI" id="CHEBI:59789"/>
    </ligand>
</feature>
<feature type="binding site" evidence="2">
    <location>
        <position position="168"/>
    </location>
    <ligand>
        <name>S-adenosyl-L-methionine</name>
        <dbReference type="ChEBI" id="CHEBI:59789"/>
    </ligand>
</feature>
<feature type="binding site" evidence="2">
    <location>
        <position position="172"/>
    </location>
    <ligand>
        <name>substrate</name>
    </ligand>
</feature>
<feature type="binding site" evidence="2">
    <location>
        <position position="204"/>
    </location>
    <ligand>
        <name>substrate</name>
    </ligand>
</feature>
<feature type="binding site" evidence="2">
    <location>
        <begin position="241"/>
        <end position="244"/>
    </location>
    <ligand>
        <name>substrate</name>
    </ligand>
</feature>
<dbReference type="EC" id="2.1.1.33" evidence="2"/>
<dbReference type="EMBL" id="AL939118">
    <property type="protein sequence ID" value="CAC08407.1"/>
    <property type="molecule type" value="Genomic_DNA"/>
</dbReference>
<dbReference type="RefSeq" id="NP_628290.1">
    <property type="nucleotide sequence ID" value="NC_003888.3"/>
</dbReference>
<dbReference type="RefSeq" id="WP_003974862.1">
    <property type="nucleotide sequence ID" value="NZ_VNID01000030.1"/>
</dbReference>
<dbReference type="SMR" id="Q9F305"/>
<dbReference type="FunCoup" id="Q9F305">
    <property type="interactions" value="128"/>
</dbReference>
<dbReference type="STRING" id="100226.gene:17761752"/>
<dbReference type="PaxDb" id="100226-SCO4111"/>
<dbReference type="GeneID" id="91384927"/>
<dbReference type="KEGG" id="sco:SCO4111"/>
<dbReference type="PATRIC" id="fig|100226.15.peg.4171"/>
<dbReference type="eggNOG" id="COG0220">
    <property type="taxonomic scope" value="Bacteria"/>
</dbReference>
<dbReference type="HOGENOM" id="CLU_050910_0_1_11"/>
<dbReference type="InParanoid" id="Q9F305"/>
<dbReference type="OrthoDB" id="9802090at2"/>
<dbReference type="PhylomeDB" id="Q9F305"/>
<dbReference type="UniPathway" id="UPA00989"/>
<dbReference type="Proteomes" id="UP000001973">
    <property type="component" value="Chromosome"/>
</dbReference>
<dbReference type="GO" id="GO:0043527">
    <property type="term" value="C:tRNA methyltransferase complex"/>
    <property type="evidence" value="ECO:0000318"/>
    <property type="project" value="GO_Central"/>
</dbReference>
<dbReference type="GO" id="GO:0008176">
    <property type="term" value="F:tRNA (guanine(46)-N7)-methyltransferase activity"/>
    <property type="evidence" value="ECO:0000318"/>
    <property type="project" value="GO_Central"/>
</dbReference>
<dbReference type="GO" id="GO:0036265">
    <property type="term" value="P:RNA (guanine-N7)-methylation"/>
    <property type="evidence" value="ECO:0000318"/>
    <property type="project" value="GO_Central"/>
</dbReference>
<dbReference type="GO" id="GO:0030488">
    <property type="term" value="P:tRNA methylation"/>
    <property type="evidence" value="ECO:0000318"/>
    <property type="project" value="GO_Central"/>
</dbReference>
<dbReference type="FunFam" id="3.40.50.150:FF:000035">
    <property type="entry name" value="tRNA (guanine-N(7)-)-methyltransferase"/>
    <property type="match status" value="1"/>
</dbReference>
<dbReference type="Gene3D" id="3.40.50.150">
    <property type="entry name" value="Vaccinia Virus protein VP39"/>
    <property type="match status" value="1"/>
</dbReference>
<dbReference type="HAMAP" id="MF_01057">
    <property type="entry name" value="tRNA_methyltr_TrmB"/>
    <property type="match status" value="1"/>
</dbReference>
<dbReference type="InterPro" id="IPR029063">
    <property type="entry name" value="SAM-dependent_MTases_sf"/>
</dbReference>
<dbReference type="InterPro" id="IPR003358">
    <property type="entry name" value="tRNA_(Gua-N-7)_MeTrfase_Trmb"/>
</dbReference>
<dbReference type="InterPro" id="IPR055361">
    <property type="entry name" value="tRNA_methyltr_TrmB_bact"/>
</dbReference>
<dbReference type="NCBIfam" id="TIGR00091">
    <property type="entry name" value="tRNA (guanosine(46)-N7)-methyltransferase TrmB"/>
    <property type="match status" value="1"/>
</dbReference>
<dbReference type="PANTHER" id="PTHR23417">
    <property type="entry name" value="3-DEOXY-D-MANNO-OCTULOSONIC-ACID TRANSFERASE/TRNA GUANINE-N 7 - -METHYLTRANSFERASE"/>
    <property type="match status" value="1"/>
</dbReference>
<dbReference type="PANTHER" id="PTHR23417:SF14">
    <property type="entry name" value="PENTACOTRIPEPTIDE-REPEAT REGION OF PRORP DOMAIN-CONTAINING PROTEIN"/>
    <property type="match status" value="1"/>
</dbReference>
<dbReference type="Pfam" id="PF02390">
    <property type="entry name" value="Methyltransf_4"/>
    <property type="match status" value="1"/>
</dbReference>
<dbReference type="SUPFAM" id="SSF53335">
    <property type="entry name" value="S-adenosyl-L-methionine-dependent methyltransferases"/>
    <property type="match status" value="1"/>
</dbReference>
<dbReference type="PROSITE" id="PS51625">
    <property type="entry name" value="SAM_MT_TRMB"/>
    <property type="match status" value="1"/>
</dbReference>
<name>TRMB_STRCO</name>
<organism>
    <name type="scientific">Streptomyces coelicolor (strain ATCC BAA-471 / A3(2) / M145)</name>
    <dbReference type="NCBI Taxonomy" id="100226"/>
    <lineage>
        <taxon>Bacteria</taxon>
        <taxon>Bacillati</taxon>
        <taxon>Actinomycetota</taxon>
        <taxon>Actinomycetes</taxon>
        <taxon>Kitasatosporales</taxon>
        <taxon>Streptomycetaceae</taxon>
        <taxon>Streptomyces</taxon>
        <taxon>Streptomyces albidoflavus group</taxon>
    </lineage>
</organism>
<reference key="1">
    <citation type="journal article" date="2002" name="Nature">
        <title>Complete genome sequence of the model actinomycete Streptomyces coelicolor A3(2).</title>
        <authorList>
            <person name="Bentley S.D."/>
            <person name="Chater K.F."/>
            <person name="Cerdeno-Tarraga A.-M."/>
            <person name="Challis G.L."/>
            <person name="Thomson N.R."/>
            <person name="James K.D."/>
            <person name="Harris D.E."/>
            <person name="Quail M.A."/>
            <person name="Kieser H."/>
            <person name="Harper D."/>
            <person name="Bateman A."/>
            <person name="Brown S."/>
            <person name="Chandra G."/>
            <person name="Chen C.W."/>
            <person name="Collins M."/>
            <person name="Cronin A."/>
            <person name="Fraser A."/>
            <person name="Goble A."/>
            <person name="Hidalgo J."/>
            <person name="Hornsby T."/>
            <person name="Howarth S."/>
            <person name="Huang C.-H."/>
            <person name="Kieser T."/>
            <person name="Larke L."/>
            <person name="Murphy L.D."/>
            <person name="Oliver K."/>
            <person name="O'Neil S."/>
            <person name="Rabbinowitsch E."/>
            <person name="Rajandream M.A."/>
            <person name="Rutherford K.M."/>
            <person name="Rutter S."/>
            <person name="Seeger K."/>
            <person name="Saunders D."/>
            <person name="Sharp S."/>
            <person name="Squares R."/>
            <person name="Squares S."/>
            <person name="Taylor K."/>
            <person name="Warren T."/>
            <person name="Wietzorrek A."/>
            <person name="Woodward J.R."/>
            <person name="Barrell B.G."/>
            <person name="Parkhill J."/>
            <person name="Hopwood D.A."/>
        </authorList>
    </citation>
    <scope>NUCLEOTIDE SEQUENCE [LARGE SCALE GENOMIC DNA]</scope>
    <source>
        <strain>ATCC BAA-471 / A3(2) / M145</strain>
    </source>
</reference>
<accession>Q9F305</accession>
<gene>
    <name evidence="2" type="primary">trmB</name>
    <name type="ordered locus">SCO4111</name>
    <name type="ORF">SCD17A.03c</name>
</gene>
<proteinExistence type="inferred from homology"/>